<accession>P0CR40</accession>
<accession>Q55X19</accession>
<accession>Q5KMW5</accession>
<accession>Q5KMW6</accession>
<dbReference type="EMBL" id="AE017342">
    <property type="protein sequence ID" value="AAW41460.1"/>
    <property type="molecule type" value="Genomic_DNA"/>
</dbReference>
<dbReference type="EMBL" id="AE017342">
    <property type="protein sequence ID" value="AAW41461.1"/>
    <property type="molecule type" value="Genomic_DNA"/>
</dbReference>
<dbReference type="RefSeq" id="XP_568767.1">
    <molecule id="P0CR40-1"/>
    <property type="nucleotide sequence ID" value="XM_568767.1"/>
</dbReference>
<dbReference type="RefSeq" id="XP_568768.1">
    <property type="nucleotide sequence ID" value="XM_568768.1"/>
</dbReference>
<dbReference type="SMR" id="P0CR40"/>
<dbReference type="FunCoup" id="P0CR40">
    <property type="interactions" value="347"/>
</dbReference>
<dbReference type="STRING" id="214684.P0CR40"/>
<dbReference type="PaxDb" id="214684-P0CR40"/>
<dbReference type="EnsemblFungi" id="AAW41460">
    <molecule id="P0CR40-1"/>
    <property type="protein sequence ID" value="AAW41460"/>
    <property type="gene ID" value="CNB00260"/>
</dbReference>
<dbReference type="EnsemblFungi" id="AAW41461">
    <molecule id="P0CR40-2"/>
    <property type="protein sequence ID" value="AAW41461"/>
    <property type="gene ID" value="CNB00260"/>
</dbReference>
<dbReference type="GeneID" id="3255871"/>
<dbReference type="KEGG" id="cne:CNB00260"/>
<dbReference type="VEuPathDB" id="FungiDB:CNB00260"/>
<dbReference type="eggNOG" id="KOG1985">
    <property type="taxonomic scope" value="Eukaryota"/>
</dbReference>
<dbReference type="InParanoid" id="P0CR40"/>
<dbReference type="OMA" id="AVECSKQ"/>
<dbReference type="OrthoDB" id="49016at2759"/>
<dbReference type="Proteomes" id="UP000002149">
    <property type="component" value="Chromosome 2"/>
</dbReference>
<dbReference type="GO" id="GO:0030127">
    <property type="term" value="C:COPII vesicle coat"/>
    <property type="evidence" value="ECO:0000318"/>
    <property type="project" value="GO_Central"/>
</dbReference>
<dbReference type="GO" id="GO:0070971">
    <property type="term" value="C:endoplasmic reticulum exit site"/>
    <property type="evidence" value="ECO:0000318"/>
    <property type="project" value="GO_Central"/>
</dbReference>
<dbReference type="GO" id="GO:0005789">
    <property type="term" value="C:endoplasmic reticulum membrane"/>
    <property type="evidence" value="ECO:0007669"/>
    <property type="project" value="UniProtKB-SubCell"/>
</dbReference>
<dbReference type="GO" id="GO:0000139">
    <property type="term" value="C:Golgi membrane"/>
    <property type="evidence" value="ECO:0007669"/>
    <property type="project" value="UniProtKB-SubCell"/>
</dbReference>
<dbReference type="GO" id="GO:0000149">
    <property type="term" value="F:SNARE binding"/>
    <property type="evidence" value="ECO:0000318"/>
    <property type="project" value="GO_Central"/>
</dbReference>
<dbReference type="GO" id="GO:0008270">
    <property type="term" value="F:zinc ion binding"/>
    <property type="evidence" value="ECO:0000318"/>
    <property type="project" value="GO_Central"/>
</dbReference>
<dbReference type="GO" id="GO:0090110">
    <property type="term" value="P:COPII-coated vesicle cargo loading"/>
    <property type="evidence" value="ECO:0000318"/>
    <property type="project" value="GO_Central"/>
</dbReference>
<dbReference type="GO" id="GO:0006886">
    <property type="term" value="P:intracellular protein transport"/>
    <property type="evidence" value="ECO:0007669"/>
    <property type="project" value="InterPro"/>
</dbReference>
<dbReference type="CDD" id="cd01479">
    <property type="entry name" value="Sec24-like"/>
    <property type="match status" value="1"/>
</dbReference>
<dbReference type="CDD" id="cd00201">
    <property type="entry name" value="WW"/>
    <property type="match status" value="1"/>
</dbReference>
<dbReference type="Gene3D" id="2.20.70.10">
    <property type="match status" value="1"/>
</dbReference>
<dbReference type="Gene3D" id="2.60.40.1670">
    <property type="entry name" value="beta-sandwich domain of Sec23/24"/>
    <property type="match status" value="1"/>
</dbReference>
<dbReference type="Gene3D" id="1.20.120.730">
    <property type="entry name" value="Sec23/Sec24 helical domain"/>
    <property type="match status" value="1"/>
</dbReference>
<dbReference type="Gene3D" id="3.40.20.10">
    <property type="entry name" value="Severin"/>
    <property type="match status" value="1"/>
</dbReference>
<dbReference type="Gene3D" id="3.40.50.410">
    <property type="entry name" value="von Willebrand factor, type A domain"/>
    <property type="match status" value="1"/>
</dbReference>
<dbReference type="Gene3D" id="2.30.30.380">
    <property type="entry name" value="Zn-finger domain of Sec23/24"/>
    <property type="match status" value="1"/>
</dbReference>
<dbReference type="InterPro" id="IPR029006">
    <property type="entry name" value="ADF-H/Gelsolin-like_dom_sf"/>
</dbReference>
<dbReference type="InterPro" id="IPR007123">
    <property type="entry name" value="Gelsolin-like_dom"/>
</dbReference>
<dbReference type="InterPro" id="IPR036180">
    <property type="entry name" value="Gelsolin-like_dom_sf"/>
</dbReference>
<dbReference type="InterPro" id="IPR006900">
    <property type="entry name" value="Sec23/24_helical_dom"/>
</dbReference>
<dbReference type="InterPro" id="IPR036175">
    <property type="entry name" value="Sec23/24_helical_dom_sf"/>
</dbReference>
<dbReference type="InterPro" id="IPR006896">
    <property type="entry name" value="Sec23/24_trunk_dom"/>
</dbReference>
<dbReference type="InterPro" id="IPR012990">
    <property type="entry name" value="Sec23_24_beta_S"/>
</dbReference>
<dbReference type="InterPro" id="IPR050550">
    <property type="entry name" value="SEC23_SEC24_subfamily"/>
</dbReference>
<dbReference type="InterPro" id="IPR041742">
    <property type="entry name" value="Sec24-like_trunk_dom"/>
</dbReference>
<dbReference type="InterPro" id="IPR036465">
    <property type="entry name" value="vWFA_dom_sf"/>
</dbReference>
<dbReference type="InterPro" id="IPR001202">
    <property type="entry name" value="WW_dom"/>
</dbReference>
<dbReference type="InterPro" id="IPR036020">
    <property type="entry name" value="WW_dom_sf"/>
</dbReference>
<dbReference type="InterPro" id="IPR006895">
    <property type="entry name" value="Znf_Sec23_Sec24"/>
</dbReference>
<dbReference type="InterPro" id="IPR036174">
    <property type="entry name" value="Znf_Sec23_Sec24_sf"/>
</dbReference>
<dbReference type="PANTHER" id="PTHR13803">
    <property type="entry name" value="SEC24-RELATED PROTEIN"/>
    <property type="match status" value="1"/>
</dbReference>
<dbReference type="PANTHER" id="PTHR13803:SF39">
    <property type="entry name" value="SECRETORY 24AB, ISOFORM A"/>
    <property type="match status" value="1"/>
</dbReference>
<dbReference type="Pfam" id="PF00626">
    <property type="entry name" value="Gelsolin"/>
    <property type="match status" value="1"/>
</dbReference>
<dbReference type="Pfam" id="PF08033">
    <property type="entry name" value="Sec23_BS"/>
    <property type="match status" value="1"/>
</dbReference>
<dbReference type="Pfam" id="PF04815">
    <property type="entry name" value="Sec23_helical"/>
    <property type="match status" value="1"/>
</dbReference>
<dbReference type="Pfam" id="PF04811">
    <property type="entry name" value="Sec23_trunk"/>
    <property type="match status" value="1"/>
</dbReference>
<dbReference type="Pfam" id="PF00397">
    <property type="entry name" value="WW"/>
    <property type="match status" value="1"/>
</dbReference>
<dbReference type="Pfam" id="PF04810">
    <property type="entry name" value="zf-Sec23_Sec24"/>
    <property type="match status" value="1"/>
</dbReference>
<dbReference type="SMART" id="SM00456">
    <property type="entry name" value="WW"/>
    <property type="match status" value="1"/>
</dbReference>
<dbReference type="SUPFAM" id="SSF81995">
    <property type="entry name" value="beta-sandwich domain of Sec23/24"/>
    <property type="match status" value="1"/>
</dbReference>
<dbReference type="SUPFAM" id="SSF82754">
    <property type="entry name" value="C-terminal, gelsolin-like domain of Sec23/24"/>
    <property type="match status" value="1"/>
</dbReference>
<dbReference type="SUPFAM" id="SSF81811">
    <property type="entry name" value="Helical domain of Sec23/24"/>
    <property type="match status" value="1"/>
</dbReference>
<dbReference type="SUPFAM" id="SSF53300">
    <property type="entry name" value="vWA-like"/>
    <property type="match status" value="1"/>
</dbReference>
<dbReference type="SUPFAM" id="SSF51045">
    <property type="entry name" value="WW domain"/>
    <property type="match status" value="1"/>
</dbReference>
<dbReference type="SUPFAM" id="SSF82919">
    <property type="entry name" value="Zn-finger domain of Sec23/24"/>
    <property type="match status" value="1"/>
</dbReference>
<dbReference type="PROSITE" id="PS50020">
    <property type="entry name" value="WW_DOMAIN_2"/>
    <property type="match status" value="1"/>
</dbReference>
<feature type="chain" id="PRO_0000295486" description="Protein transport protein SEC24">
    <location>
        <begin position="1"/>
        <end position="920"/>
    </location>
</feature>
<feature type="domain" description="WW" evidence="2">
    <location>
        <begin position="5"/>
        <end position="39"/>
    </location>
</feature>
<feature type="region of interest" description="Zinc finger-like">
    <location>
        <begin position="248"/>
        <end position="273"/>
    </location>
</feature>
<feature type="binding site" evidence="1">
    <location>
        <position position="248"/>
    </location>
    <ligand>
        <name>Zn(2+)</name>
        <dbReference type="ChEBI" id="CHEBI:29105"/>
    </ligand>
</feature>
<feature type="binding site" evidence="1">
    <location>
        <position position="251"/>
    </location>
    <ligand>
        <name>Zn(2+)</name>
        <dbReference type="ChEBI" id="CHEBI:29105"/>
    </ligand>
</feature>
<feature type="binding site" evidence="1">
    <location>
        <position position="270"/>
    </location>
    <ligand>
        <name>Zn(2+)</name>
        <dbReference type="ChEBI" id="CHEBI:29105"/>
    </ligand>
</feature>
<feature type="binding site" evidence="1">
    <location>
        <position position="273"/>
    </location>
    <ligand>
        <name>Zn(2+)</name>
        <dbReference type="ChEBI" id="CHEBI:29105"/>
    </ligand>
</feature>
<feature type="splice variant" id="VSP_026926" description="In isoform 2." evidence="3">
    <location>
        <begin position="1"/>
        <end position="63"/>
    </location>
</feature>
<organism>
    <name type="scientific">Cryptococcus neoformans var. neoformans serotype D (strain JEC21 / ATCC MYA-565)</name>
    <name type="common">Filobasidiella neoformans</name>
    <dbReference type="NCBI Taxonomy" id="214684"/>
    <lineage>
        <taxon>Eukaryota</taxon>
        <taxon>Fungi</taxon>
        <taxon>Dikarya</taxon>
        <taxon>Basidiomycota</taxon>
        <taxon>Agaricomycotina</taxon>
        <taxon>Tremellomycetes</taxon>
        <taxon>Tremellales</taxon>
        <taxon>Cryptococcaceae</taxon>
        <taxon>Cryptococcus</taxon>
        <taxon>Cryptococcus neoformans species complex</taxon>
    </lineage>
</organism>
<name>SEC24_CRYNJ</name>
<sequence>MSQPIMLPQGWEARWDPQANAYIYVDQSTGRSQWEVPLNPTFPTSPTPHAPPQRHGRRAYPSAMYAHAYDTPAPHVGPPQPVAGYAEQGTPQFITPGFEGQQPVQQPPYAAVDHVAGQFQQMNIAPGAAPVAGAAAGAYQGAGYAEKQLHSTKTKTVNLIGLQPDVAALDNPPPPALLPANASVTSSAHSQPDPSYQRCTLNAMPTTQSLLNKSKLPLALVMAPYRSIRETDNDPDVPVVEDGVIARCRRCRAYINPFVTFIEGGNRWKCCMCGLSNEVPQLFDWDQRAEKPADRWARKELNHAVVEFVAPTEYMVRPPQPPVYAFVIDVSSAAIQSGMVAVAARTILESLDSLPNADNRTKVAIIAVSTSLHFFSLPADATEAGMLVVPDLTDVFLPKPVDLLVNLTESRPAIESLLAKLSDMFQDSHTVGSALGSGLQAAHQLIGKIGGKIIALGASLPTIGEGVLKARDDPKLLGTSKESQLLNAGNNWYKTFAIECSKNQVSVDMFLFSGTYTDVATLGCLPRYTAGQTYLYPGFNASRSEDAIKFATEFGKVLAMPIGLEAVIRVRASRGIRMSAFHGNFFIRSTDLLALPVVPQDQNYVIELQIEDDIKGSFVVIQTAVLHTTCYGERRIRVITQAMPTTDSIAELYTSADQIALATYLANKAVERSMSHSLDDARNHVTNRLGEMLTVYKNQVTSAAGGASAQLAVPENLLLLPLLCCALTKHVGLREGASIPPDLRAYAQCLLTTLPCQTLIPYIHPRFYSLHNMPPEAGTIGGDDGAMILPPALNLTSEKLERHGLFLIEDGQNIFLWVGHDAVPRLIQDVFDLASYHELQGGKYTLPRLDNPFSERVCNVVDKTREMRRGVYRPQLYVVKSDAEPALRSWALSLLVEDRMDRMSSYAQYLTTVKSKVNGS</sequence>
<protein>
    <recommendedName>
        <fullName>Protein transport protein SEC24</fullName>
    </recommendedName>
</protein>
<evidence type="ECO:0000250" key="1"/>
<evidence type="ECO:0000255" key="2">
    <source>
        <dbReference type="PROSITE-ProRule" id="PRU00224"/>
    </source>
</evidence>
<evidence type="ECO:0000305" key="3"/>
<proteinExistence type="inferred from homology"/>
<gene>
    <name type="primary">SEC24</name>
    <name type="ordered locus">CNB00260</name>
</gene>
<reference key="1">
    <citation type="journal article" date="2005" name="Science">
        <title>The genome of the basidiomycetous yeast and human pathogen Cryptococcus neoformans.</title>
        <authorList>
            <person name="Loftus B.J."/>
            <person name="Fung E."/>
            <person name="Roncaglia P."/>
            <person name="Rowley D."/>
            <person name="Amedeo P."/>
            <person name="Bruno D."/>
            <person name="Vamathevan J."/>
            <person name="Miranda M."/>
            <person name="Anderson I.J."/>
            <person name="Fraser J.A."/>
            <person name="Allen J.E."/>
            <person name="Bosdet I.E."/>
            <person name="Brent M.R."/>
            <person name="Chiu R."/>
            <person name="Doering T.L."/>
            <person name="Donlin M.J."/>
            <person name="D'Souza C.A."/>
            <person name="Fox D.S."/>
            <person name="Grinberg V."/>
            <person name="Fu J."/>
            <person name="Fukushima M."/>
            <person name="Haas B.J."/>
            <person name="Huang J.C."/>
            <person name="Janbon G."/>
            <person name="Jones S.J.M."/>
            <person name="Koo H.L."/>
            <person name="Krzywinski M.I."/>
            <person name="Kwon-Chung K.J."/>
            <person name="Lengeler K.B."/>
            <person name="Maiti R."/>
            <person name="Marra M.A."/>
            <person name="Marra R.E."/>
            <person name="Mathewson C.A."/>
            <person name="Mitchell T.G."/>
            <person name="Pertea M."/>
            <person name="Riggs F.R."/>
            <person name="Salzberg S.L."/>
            <person name="Schein J.E."/>
            <person name="Shvartsbeyn A."/>
            <person name="Shin H."/>
            <person name="Shumway M."/>
            <person name="Specht C.A."/>
            <person name="Suh B.B."/>
            <person name="Tenney A."/>
            <person name="Utterback T.R."/>
            <person name="Wickes B.L."/>
            <person name="Wortman J.R."/>
            <person name="Wye N.H."/>
            <person name="Kronstad J.W."/>
            <person name="Lodge J.K."/>
            <person name="Heitman J."/>
            <person name="Davis R.W."/>
            <person name="Fraser C.M."/>
            <person name="Hyman R.W."/>
        </authorList>
    </citation>
    <scope>NUCLEOTIDE SEQUENCE [LARGE SCALE GENOMIC DNA]</scope>
    <source>
        <strain>JEC21 / ATCC MYA-565</strain>
    </source>
</reference>
<keyword id="KW-0025">Alternative splicing</keyword>
<keyword id="KW-0963">Cytoplasm</keyword>
<keyword id="KW-0968">Cytoplasmic vesicle</keyword>
<keyword id="KW-0256">Endoplasmic reticulum</keyword>
<keyword id="KW-0931">ER-Golgi transport</keyword>
<keyword id="KW-0333">Golgi apparatus</keyword>
<keyword id="KW-0472">Membrane</keyword>
<keyword id="KW-0479">Metal-binding</keyword>
<keyword id="KW-0653">Protein transport</keyword>
<keyword id="KW-1185">Reference proteome</keyword>
<keyword id="KW-0813">Transport</keyword>
<keyword id="KW-0862">Zinc</keyword>
<comment type="function">
    <text evidence="1">Component of the coat protein complex II (COPII) which promotes the formation of transport vesicles from the endoplasmic reticulum (ER). The coat has two main functions, the physical deformation of the endoplasmic reticulum membrane into vesicles and the selection of cargo molecules (By similarity).</text>
</comment>
<comment type="subunit">
    <text evidence="1">The COPII coat is composed of at least 5 proteins: the SEC23/24 complex, the SEC13/31 complex, and the protein SAR1. Golgi apparatus membrane; Peripheral membrane protein; Cytoplasmic side.</text>
</comment>
<comment type="subcellular location">
    <subcellularLocation>
        <location evidence="1">Cytoplasm</location>
    </subcellularLocation>
    <subcellularLocation>
        <location evidence="1">Cytoplasmic vesicle</location>
        <location evidence="1">COPII-coated vesicle membrane</location>
        <topology evidence="1">Peripheral membrane protein</topology>
        <orientation evidence="1">Cytoplasmic side</orientation>
    </subcellularLocation>
    <subcellularLocation>
        <location evidence="1">Endoplasmic reticulum membrane</location>
        <topology evidence="1">Peripheral membrane protein</topology>
        <orientation evidence="1">Cytoplasmic side</orientation>
    </subcellularLocation>
    <subcellularLocation>
        <location evidence="1">Golgi apparatus membrane</location>
        <topology evidence="1">Peripheral membrane protein</topology>
        <orientation evidence="1">Cytoplasmic side</orientation>
    </subcellularLocation>
</comment>
<comment type="alternative products">
    <event type="alternative splicing"/>
    <isoform>
        <id>P0CR40-1</id>
        <name>1</name>
        <sequence type="displayed"/>
    </isoform>
    <isoform>
        <id>P0CR40-2</id>
        <name>2</name>
        <sequence type="described" ref="VSP_026926"/>
    </isoform>
</comment>
<comment type="similarity">
    <text evidence="3">Belongs to the SEC23/SEC24 family. SEC24 subfamily.</text>
</comment>